<protein>
    <recommendedName>
        <fullName>Ras GTPase-activating protein gap-1</fullName>
        <shortName>GTPase-activating protein 1</shortName>
    </recommendedName>
</protein>
<evidence type="ECO:0000250" key="1"/>
<evidence type="ECO:0000255" key="2">
    <source>
        <dbReference type="PROSITE-ProRule" id="PRU00145"/>
    </source>
</evidence>
<evidence type="ECO:0000255" key="3">
    <source>
        <dbReference type="PROSITE-ProRule" id="PRU00167"/>
    </source>
</evidence>
<evidence type="ECO:0000269" key="4">
    <source>
    </source>
</evidence>
<sequence>MVLSCRVVDCGGLKLKENQTLLLLVSTIHNSSEVGKLSIDAEEKRSKEWLEMPCAEGMLSLKLTLWQDLLKGINSVFHGQVRVDVDENWKSGPAKWFYLRSKANEDGEGGEDGGDIGDATVKVTYQIDHILRMQVYKPLLDLLFLAGDVQPLTASLVAVIEALPKVELGPVSRSLVELMAQSDRIRPVLSSLYVNSILKCQDENTLFRGQSLSGKMLFEILTTYGKMYLITTLKPVVDKIYKERKNCEVDPARVAVGASLEKNRNNLLVYFQMLFERVTTSSTNCPHLIKQLLYDLRNVVGTHSSRSGVQRLAVSSFVIMRFFAAAILNPKAFEIRKDQPDLRVSRTLLLLSKLLQRLSNCSVSEGPLSSKEIWLNGVFETVTSEQHKSVMASFLDNISLVGDRSEPQKCTVFKFGNLQQVDRSRLAWKKVLHYKKRYVQLTNTHLIWQKDVQCAPKGTVPLSDIKFVNVDNKNIITIVCETMQLQFEAPGGVEATDWLNAIERQRNRAAHEIAETPGEHFFVDAERHVDKIHTLLYKYRETMIEWRDQLQSNVELDEKTAPELLKASYVVEEERQSHKDSLIATLCSTIDVTDAIQLAHTEYEKENKVSRRIDAIITAKKRQKSFSVK</sequence>
<reference key="1">
    <citation type="journal article" date="1997" name="Genes Dev.">
        <title>Inhibition of Caenorhabditis elegans vulval induction by gap-1 and by let-23 receptor tyrosine kinase.</title>
        <authorList>
            <person name="Hajnal A."/>
            <person name="Whitfield C.W."/>
            <person name="Kim S.K."/>
        </authorList>
    </citation>
    <scope>NUCLEOTIDE SEQUENCE [MRNA]</scope>
    <scope>FUNCTION</scope>
    <source>
        <strain>Bristol N2</strain>
    </source>
</reference>
<reference key="2">
    <citation type="journal article" date="1998" name="Science">
        <title>Genome sequence of the nematode C. elegans: a platform for investigating biology.</title>
        <authorList>
            <consortium name="The C. elegans sequencing consortium"/>
        </authorList>
    </citation>
    <scope>NUCLEOTIDE SEQUENCE [LARGE SCALE GENOMIC DNA]</scope>
    <source>
        <strain>Bristol N2</strain>
    </source>
</reference>
<name>GAP1_CAEEL</name>
<comment type="function">
    <text evidence="4">GTPase-activating protein, which inhibits the vulval induction by acting as a negative regulator for the member of the Ras family let-60. Probably decreases the signaling activity of Ras by stimulating its intrinsic GTPase activity, thereby lowering the levels of GTP-bound, active Ras.</text>
</comment>
<comment type="subcellular location">
    <subcellularLocation>
        <location evidence="1">Cytoplasm</location>
    </subcellularLocation>
</comment>
<organism>
    <name type="scientific">Caenorhabditis elegans</name>
    <dbReference type="NCBI Taxonomy" id="6239"/>
    <lineage>
        <taxon>Eukaryota</taxon>
        <taxon>Metazoa</taxon>
        <taxon>Ecdysozoa</taxon>
        <taxon>Nematoda</taxon>
        <taxon>Chromadorea</taxon>
        <taxon>Rhabditida</taxon>
        <taxon>Rhabditina</taxon>
        <taxon>Rhabditomorpha</taxon>
        <taxon>Rhabditoidea</taxon>
        <taxon>Rhabditidae</taxon>
        <taxon>Peloderinae</taxon>
        <taxon>Caenorhabditis</taxon>
    </lineage>
</organism>
<proteinExistence type="evidence at transcript level"/>
<accession>Q22720</accession>
<feature type="chain" id="PRO_0000056663" description="Ras GTPase-activating protein gap-1">
    <location>
        <begin position="1"/>
        <end position="629"/>
    </location>
</feature>
<feature type="domain" description="Ras-GAP" evidence="3">
    <location>
        <begin position="183"/>
        <end position="398"/>
    </location>
</feature>
<feature type="domain" description="PH" evidence="2">
    <location>
        <begin position="411"/>
        <end position="507"/>
    </location>
</feature>
<feature type="site" description="Arginine finger; crucial for GTP hydrolysis by stabilizing the transition state" evidence="3">
    <location>
        <position position="208"/>
    </location>
</feature>
<gene>
    <name type="primary">gap-1</name>
    <name type="ORF">T24C12.2</name>
</gene>
<keyword id="KW-0963">Cytoplasm</keyword>
<keyword id="KW-0343">GTPase activation</keyword>
<keyword id="KW-1185">Reference proteome</keyword>
<dbReference type="EMBL" id="AF118123">
    <property type="protein sequence ID" value="AAD13781.1"/>
    <property type="molecule type" value="mRNA"/>
</dbReference>
<dbReference type="EMBL" id="FO081420">
    <property type="protein sequence ID" value="CCD71505.1"/>
    <property type="molecule type" value="Genomic_DNA"/>
</dbReference>
<dbReference type="PIR" id="T34370">
    <property type="entry name" value="T34370"/>
</dbReference>
<dbReference type="RefSeq" id="NP_508404.1">
    <property type="nucleotide sequence ID" value="NM_076003.1"/>
</dbReference>
<dbReference type="SMR" id="Q22720"/>
<dbReference type="FunCoup" id="Q22720">
    <property type="interactions" value="383"/>
</dbReference>
<dbReference type="STRING" id="6239.T24C12.2.1"/>
<dbReference type="PaxDb" id="6239-T24C12.2"/>
<dbReference type="PeptideAtlas" id="Q22720"/>
<dbReference type="EnsemblMetazoa" id="T24C12.2.1">
    <property type="protein sequence ID" value="T24C12.2.1"/>
    <property type="gene ID" value="WBGene00001515"/>
</dbReference>
<dbReference type="GeneID" id="180530"/>
<dbReference type="KEGG" id="cel:CELE_T24C12.2"/>
<dbReference type="UCSC" id="T24C12.2">
    <property type="organism name" value="c. elegans"/>
</dbReference>
<dbReference type="AGR" id="WB:WBGene00001515"/>
<dbReference type="CTD" id="180530"/>
<dbReference type="WormBase" id="T24C12.2a">
    <property type="protein sequence ID" value="CE05002"/>
    <property type="gene ID" value="WBGene00001515"/>
    <property type="gene designation" value="gap-1"/>
</dbReference>
<dbReference type="eggNOG" id="KOG2059">
    <property type="taxonomic scope" value="Eukaryota"/>
</dbReference>
<dbReference type="GeneTree" id="ENSGT00940000167058"/>
<dbReference type="HOGENOM" id="CLU_483347_0_0_1"/>
<dbReference type="InParanoid" id="Q22720"/>
<dbReference type="OMA" id="WLEMPCA"/>
<dbReference type="OrthoDB" id="1562946at2759"/>
<dbReference type="PhylomeDB" id="Q22720"/>
<dbReference type="SignaLink" id="Q22720"/>
<dbReference type="PRO" id="PR:Q22720"/>
<dbReference type="Proteomes" id="UP000001940">
    <property type="component" value="Chromosome X"/>
</dbReference>
<dbReference type="Bgee" id="WBGene00001515">
    <property type="expression patterns" value="Expressed in pharyngeal muscle cell (C elegans) and 3 other cell types or tissues"/>
</dbReference>
<dbReference type="GO" id="GO:0005737">
    <property type="term" value="C:cytoplasm"/>
    <property type="evidence" value="ECO:0000303"/>
    <property type="project" value="UniProtKB"/>
</dbReference>
<dbReference type="GO" id="GO:0005096">
    <property type="term" value="F:GTPase activator activity"/>
    <property type="evidence" value="ECO:0000303"/>
    <property type="project" value="UniProtKB"/>
</dbReference>
<dbReference type="GO" id="GO:0008306">
    <property type="term" value="P:associative learning"/>
    <property type="evidence" value="ECO:0000315"/>
    <property type="project" value="WormBase"/>
</dbReference>
<dbReference type="GO" id="GO:0007635">
    <property type="term" value="P:chemosensory behavior"/>
    <property type="evidence" value="ECO:0000316"/>
    <property type="project" value="WormBase"/>
</dbReference>
<dbReference type="GO" id="GO:0007616">
    <property type="term" value="P:long-term memory"/>
    <property type="evidence" value="ECO:0000316"/>
    <property type="project" value="WormBase"/>
</dbReference>
<dbReference type="GO" id="GO:0046580">
    <property type="term" value="P:negative regulation of Ras protein signal transduction"/>
    <property type="evidence" value="ECO:0000270"/>
    <property type="project" value="UniProtKB"/>
</dbReference>
<dbReference type="GO" id="GO:0007614">
    <property type="term" value="P:short-term memory"/>
    <property type="evidence" value="ECO:0000316"/>
    <property type="project" value="WormBase"/>
</dbReference>
<dbReference type="CDD" id="cd00821">
    <property type="entry name" value="PH"/>
    <property type="match status" value="1"/>
</dbReference>
<dbReference type="CDD" id="cd05128">
    <property type="entry name" value="RasGAP_GAP1_like"/>
    <property type="match status" value="1"/>
</dbReference>
<dbReference type="FunFam" id="1.10.506.10:FF:000063">
    <property type="entry name" value="Ras GTPase-activating protein gap-1"/>
    <property type="match status" value="1"/>
</dbReference>
<dbReference type="Gene3D" id="1.10.506.10">
    <property type="entry name" value="GTPase Activation - p120gap, domain 1"/>
    <property type="match status" value="1"/>
</dbReference>
<dbReference type="Gene3D" id="2.30.29.30">
    <property type="entry name" value="Pleckstrin-homology domain (PH domain)/Phosphotyrosine-binding domain (PTB)"/>
    <property type="match status" value="1"/>
</dbReference>
<dbReference type="InterPro" id="IPR011993">
    <property type="entry name" value="PH-like_dom_sf"/>
</dbReference>
<dbReference type="InterPro" id="IPR001849">
    <property type="entry name" value="PH_domain"/>
</dbReference>
<dbReference type="InterPro" id="IPR039360">
    <property type="entry name" value="Ras_GTPase"/>
</dbReference>
<dbReference type="InterPro" id="IPR023152">
    <property type="entry name" value="RasGAP_CS"/>
</dbReference>
<dbReference type="InterPro" id="IPR001936">
    <property type="entry name" value="RasGAP_dom"/>
</dbReference>
<dbReference type="InterPro" id="IPR008936">
    <property type="entry name" value="Rho_GTPase_activation_prot"/>
</dbReference>
<dbReference type="PANTHER" id="PTHR10194:SF148">
    <property type="entry name" value="GTPASE-ACTIVATING PROTEIN"/>
    <property type="match status" value="1"/>
</dbReference>
<dbReference type="PANTHER" id="PTHR10194">
    <property type="entry name" value="RAS GTPASE-ACTIVATING PROTEINS"/>
    <property type="match status" value="1"/>
</dbReference>
<dbReference type="Pfam" id="PF00169">
    <property type="entry name" value="PH"/>
    <property type="match status" value="1"/>
</dbReference>
<dbReference type="Pfam" id="PF00616">
    <property type="entry name" value="RasGAP"/>
    <property type="match status" value="1"/>
</dbReference>
<dbReference type="SMART" id="SM00233">
    <property type="entry name" value="PH"/>
    <property type="match status" value="1"/>
</dbReference>
<dbReference type="SMART" id="SM00323">
    <property type="entry name" value="RasGAP"/>
    <property type="match status" value="1"/>
</dbReference>
<dbReference type="SUPFAM" id="SSF48350">
    <property type="entry name" value="GTPase activation domain, GAP"/>
    <property type="match status" value="1"/>
</dbReference>
<dbReference type="SUPFAM" id="SSF50729">
    <property type="entry name" value="PH domain-like"/>
    <property type="match status" value="1"/>
</dbReference>
<dbReference type="PROSITE" id="PS50003">
    <property type="entry name" value="PH_DOMAIN"/>
    <property type="match status" value="1"/>
</dbReference>
<dbReference type="PROSITE" id="PS00509">
    <property type="entry name" value="RAS_GTPASE_ACTIV_1"/>
    <property type="match status" value="1"/>
</dbReference>
<dbReference type="PROSITE" id="PS50018">
    <property type="entry name" value="RAS_GTPASE_ACTIV_2"/>
    <property type="match status" value="1"/>
</dbReference>